<comment type="function">
    <text evidence="1">One of the primary rRNA binding proteins, it binds directly to 16S rRNA where it nucleates assembly of the head domain of the 30S subunit.</text>
</comment>
<comment type="subunit">
    <text>Part of the 30S ribosomal subunit.</text>
</comment>
<comment type="subcellular location">
    <subcellularLocation>
        <location>Plastid</location>
        <location>Chloroplast</location>
    </subcellularLocation>
</comment>
<comment type="similarity">
    <text evidence="3">Belongs to the universal ribosomal protein uS7 family.</text>
</comment>
<dbReference type="EMBL" id="AJ627251">
    <property type="protein sequence ID" value="CAF28641.1"/>
    <property type="molecule type" value="Genomic_DNA"/>
</dbReference>
<dbReference type="EMBL" id="AJ627251">
    <property type="protein sequence ID" value="CAF28656.1"/>
    <property type="molecule type" value="Genomic_DNA"/>
</dbReference>
<dbReference type="SMR" id="Q6EVZ0"/>
<dbReference type="GO" id="GO:0009507">
    <property type="term" value="C:chloroplast"/>
    <property type="evidence" value="ECO:0007669"/>
    <property type="project" value="UniProtKB-SubCell"/>
</dbReference>
<dbReference type="GO" id="GO:0015935">
    <property type="term" value="C:small ribosomal subunit"/>
    <property type="evidence" value="ECO:0007669"/>
    <property type="project" value="InterPro"/>
</dbReference>
<dbReference type="GO" id="GO:0019843">
    <property type="term" value="F:rRNA binding"/>
    <property type="evidence" value="ECO:0007669"/>
    <property type="project" value="UniProtKB-UniRule"/>
</dbReference>
<dbReference type="GO" id="GO:0003735">
    <property type="term" value="F:structural constituent of ribosome"/>
    <property type="evidence" value="ECO:0007669"/>
    <property type="project" value="InterPro"/>
</dbReference>
<dbReference type="GO" id="GO:0006412">
    <property type="term" value="P:translation"/>
    <property type="evidence" value="ECO:0007669"/>
    <property type="project" value="UniProtKB-UniRule"/>
</dbReference>
<dbReference type="CDD" id="cd14871">
    <property type="entry name" value="uS7_Chloroplast"/>
    <property type="match status" value="1"/>
</dbReference>
<dbReference type="FunFam" id="1.10.455.10:FF:000001">
    <property type="entry name" value="30S ribosomal protein S7"/>
    <property type="match status" value="1"/>
</dbReference>
<dbReference type="Gene3D" id="1.10.455.10">
    <property type="entry name" value="Ribosomal protein S7 domain"/>
    <property type="match status" value="1"/>
</dbReference>
<dbReference type="HAMAP" id="MF_00480_B">
    <property type="entry name" value="Ribosomal_uS7_B"/>
    <property type="match status" value="1"/>
</dbReference>
<dbReference type="InterPro" id="IPR000235">
    <property type="entry name" value="Ribosomal_uS7"/>
</dbReference>
<dbReference type="InterPro" id="IPR005717">
    <property type="entry name" value="Ribosomal_uS7_bac/org-type"/>
</dbReference>
<dbReference type="InterPro" id="IPR020606">
    <property type="entry name" value="Ribosomal_uS7_CS"/>
</dbReference>
<dbReference type="InterPro" id="IPR023798">
    <property type="entry name" value="Ribosomal_uS7_dom"/>
</dbReference>
<dbReference type="InterPro" id="IPR036823">
    <property type="entry name" value="Ribosomal_uS7_dom_sf"/>
</dbReference>
<dbReference type="NCBIfam" id="TIGR01029">
    <property type="entry name" value="rpsG_bact"/>
    <property type="match status" value="1"/>
</dbReference>
<dbReference type="PANTHER" id="PTHR11205">
    <property type="entry name" value="RIBOSOMAL PROTEIN S7"/>
    <property type="match status" value="1"/>
</dbReference>
<dbReference type="Pfam" id="PF00177">
    <property type="entry name" value="Ribosomal_S7"/>
    <property type="match status" value="1"/>
</dbReference>
<dbReference type="PIRSF" id="PIRSF002122">
    <property type="entry name" value="RPS7p_RPS7a_RPS5e_RPS7o"/>
    <property type="match status" value="1"/>
</dbReference>
<dbReference type="SUPFAM" id="SSF47973">
    <property type="entry name" value="Ribosomal protein S7"/>
    <property type="match status" value="1"/>
</dbReference>
<dbReference type="PROSITE" id="PS00052">
    <property type="entry name" value="RIBOSOMAL_S7"/>
    <property type="match status" value="1"/>
</dbReference>
<evidence type="ECO:0000250" key="1"/>
<evidence type="ECO:0000255" key="2">
    <source>
        <dbReference type="HAMAP-Rule" id="MF_00480"/>
    </source>
</evidence>
<evidence type="ECO:0000305" key="3"/>
<organism>
    <name type="scientific">Nymphaea alba</name>
    <name type="common">White water-lily</name>
    <name type="synonym">Castalia alba</name>
    <dbReference type="NCBI Taxonomy" id="34301"/>
    <lineage>
        <taxon>Eukaryota</taxon>
        <taxon>Viridiplantae</taxon>
        <taxon>Streptophyta</taxon>
        <taxon>Embryophyta</taxon>
        <taxon>Tracheophyta</taxon>
        <taxon>Spermatophyta</taxon>
        <taxon>Magnoliopsida</taxon>
        <taxon>Nymphaeales</taxon>
        <taxon>Nymphaeaceae</taxon>
        <taxon>Nymphaea</taxon>
    </lineage>
</organism>
<feature type="chain" id="PRO_0000124479" description="Small ribosomal subunit protein uS7cz/uS7cy">
    <location>
        <begin position="1"/>
        <end position="155"/>
    </location>
</feature>
<geneLocation type="chloroplast"/>
<gene>
    <name type="primary">rps7-A</name>
</gene>
<gene>
    <name type="primary">rps7-B</name>
</gene>
<keyword id="KW-0150">Chloroplast</keyword>
<keyword id="KW-0934">Plastid</keyword>
<keyword id="KW-0687">Ribonucleoprotein</keyword>
<keyword id="KW-0689">Ribosomal protein</keyword>
<keyword id="KW-0694">RNA-binding</keyword>
<keyword id="KW-0699">rRNA-binding</keyword>
<reference key="1">
    <citation type="journal article" date="2004" name="Mol. Biol. Evol.">
        <title>The chloroplast genome of Nymphaea alba: whole-genome analyses and the problem of identifying the most basal angiosperm.</title>
        <authorList>
            <person name="Goremykin V.V."/>
            <person name="Hirsch-Ernst K.I."/>
            <person name="Woelfl S."/>
            <person name="Hellwig F.H."/>
        </authorList>
    </citation>
    <scope>NUCLEOTIDE SEQUENCE [LARGE SCALE GENOMIC DNA]</scope>
</reference>
<proteinExistence type="inferred from homology"/>
<name>RR7_NYMAL</name>
<protein>
    <recommendedName>
        <fullName evidence="2">Small ribosomal subunit protein uS7cz/uS7cy</fullName>
    </recommendedName>
    <alternativeName>
        <fullName>30S ribosomal protein S7, chloroplastic</fullName>
    </alternativeName>
</protein>
<sequence>MSRRGTAEEKTAKSDPIYRNRLVNMLVNRILKHGKKSLAYQIIYRAVKKIQQKTETNPLSVLRQAIRGVTPNIAVKARRVGGSTHQVPIEIGSTQGKALAIRWLLGASRKRPGRNMAFKLSSELVDAARGSGDAIRKKEETHRMAEANRAFAHFR</sequence>
<accession>Q6EVZ0</accession>